<dbReference type="EMBL" id="AB026655">
    <property type="protein sequence ID" value="BAB02104.1"/>
    <property type="molecule type" value="Genomic_DNA"/>
</dbReference>
<dbReference type="EMBL" id="CP002686">
    <property type="protein sequence ID" value="AEE76720.1"/>
    <property type="molecule type" value="Genomic_DNA"/>
</dbReference>
<dbReference type="RefSeq" id="NP_188953.1">
    <property type="nucleotide sequence ID" value="NM_113213.2"/>
</dbReference>
<dbReference type="SMR" id="Q9LS79"/>
<dbReference type="FunCoup" id="Q9LS79">
    <property type="interactions" value="1"/>
</dbReference>
<dbReference type="STRING" id="3702.Q9LS79"/>
<dbReference type="GlyCosmos" id="Q9LS79">
    <property type="glycosylation" value="17 sites, No reported glycans"/>
</dbReference>
<dbReference type="GlyGen" id="Q9LS79">
    <property type="glycosylation" value="17 sites"/>
</dbReference>
<dbReference type="PaxDb" id="3702-AT3G23120.1"/>
<dbReference type="ProteomicsDB" id="228185"/>
<dbReference type="EnsemblPlants" id="AT3G23120.1">
    <property type="protein sequence ID" value="AT3G23120.1"/>
    <property type="gene ID" value="AT3G23120"/>
</dbReference>
<dbReference type="GeneID" id="821887"/>
<dbReference type="Gramene" id="AT3G23120.1">
    <property type="protein sequence ID" value="AT3G23120.1"/>
    <property type="gene ID" value="AT3G23120"/>
</dbReference>
<dbReference type="KEGG" id="ath:AT3G23120"/>
<dbReference type="Araport" id="AT3G23120"/>
<dbReference type="TAIR" id="AT3G23120">
    <property type="gene designation" value="RLP38"/>
</dbReference>
<dbReference type="eggNOG" id="KOG0619">
    <property type="taxonomic scope" value="Eukaryota"/>
</dbReference>
<dbReference type="HOGENOM" id="CLU_000288_18_3_1"/>
<dbReference type="InParanoid" id="Q9LS79"/>
<dbReference type="OMA" id="HLWFIAR"/>
<dbReference type="PhylomeDB" id="Q9LS79"/>
<dbReference type="PRO" id="PR:Q9LS79"/>
<dbReference type="Proteomes" id="UP000006548">
    <property type="component" value="Chromosome 3"/>
</dbReference>
<dbReference type="ExpressionAtlas" id="Q9LS79">
    <property type="expression patterns" value="baseline and differential"/>
</dbReference>
<dbReference type="GO" id="GO:0005886">
    <property type="term" value="C:plasma membrane"/>
    <property type="evidence" value="ECO:0007669"/>
    <property type="project" value="UniProtKB-SubCell"/>
</dbReference>
<dbReference type="FunFam" id="3.80.10.10:FF:000111">
    <property type="entry name" value="LRR receptor-like serine/threonine-protein kinase ERECTA"/>
    <property type="match status" value="1"/>
</dbReference>
<dbReference type="FunFam" id="3.80.10.10:FF:000095">
    <property type="entry name" value="LRR receptor-like serine/threonine-protein kinase GSO1"/>
    <property type="match status" value="1"/>
</dbReference>
<dbReference type="Gene3D" id="3.80.10.10">
    <property type="entry name" value="Ribonuclease Inhibitor"/>
    <property type="match status" value="4"/>
</dbReference>
<dbReference type="InterPro" id="IPR001611">
    <property type="entry name" value="Leu-rich_rpt"/>
</dbReference>
<dbReference type="InterPro" id="IPR003591">
    <property type="entry name" value="Leu-rich_rpt_typical-subtyp"/>
</dbReference>
<dbReference type="InterPro" id="IPR032675">
    <property type="entry name" value="LRR_dom_sf"/>
</dbReference>
<dbReference type="InterPro" id="IPR013210">
    <property type="entry name" value="LRR_N_plant-typ"/>
</dbReference>
<dbReference type="InterPro" id="IPR055414">
    <property type="entry name" value="LRR_R13L4/SHOC2-like"/>
</dbReference>
<dbReference type="PANTHER" id="PTHR27004:SF203">
    <property type="entry name" value="LEUCINE-RICH REPEAT-CONTAINING N-TERMINAL PLANT-TYPE DOMAIN-CONTAINING PROTEIN"/>
    <property type="match status" value="1"/>
</dbReference>
<dbReference type="PANTHER" id="PTHR27004">
    <property type="entry name" value="RECEPTOR-LIKE PROTEIN 12 ISOFORM X1"/>
    <property type="match status" value="1"/>
</dbReference>
<dbReference type="Pfam" id="PF00560">
    <property type="entry name" value="LRR_1"/>
    <property type="match status" value="6"/>
</dbReference>
<dbReference type="Pfam" id="PF23598">
    <property type="entry name" value="LRR_14"/>
    <property type="match status" value="1"/>
</dbReference>
<dbReference type="Pfam" id="PF08263">
    <property type="entry name" value="LRRNT_2"/>
    <property type="match status" value="1"/>
</dbReference>
<dbReference type="PRINTS" id="PR00019">
    <property type="entry name" value="LEURICHRPT"/>
</dbReference>
<dbReference type="SMART" id="SM00365">
    <property type="entry name" value="LRR_SD22"/>
    <property type="match status" value="6"/>
</dbReference>
<dbReference type="SMART" id="SM00369">
    <property type="entry name" value="LRR_TYP"/>
    <property type="match status" value="7"/>
</dbReference>
<dbReference type="SUPFAM" id="SSF52058">
    <property type="entry name" value="L domain-like"/>
    <property type="match status" value="2"/>
</dbReference>
<dbReference type="PROSITE" id="PS51450">
    <property type="entry name" value="LRR"/>
    <property type="match status" value="13"/>
</dbReference>
<accession>Q9LS79</accession>
<feature type="signal peptide" evidence="4">
    <location>
        <begin position="1"/>
        <end position="30"/>
    </location>
</feature>
<feature type="chain" id="PRO_0000443964" description="Receptor-like protein 38">
    <location>
        <begin position="31"/>
        <end position="784"/>
    </location>
</feature>
<feature type="topological domain" description="Extracellular" evidence="1">
    <location>
        <begin position="31"/>
        <end position="752"/>
    </location>
</feature>
<feature type="transmembrane region" description="Helical" evidence="1">
    <location>
        <begin position="753"/>
        <end position="773"/>
    </location>
</feature>
<feature type="topological domain" description="Cytoplasmic" evidence="1">
    <location>
        <begin position="774"/>
        <end position="784"/>
    </location>
</feature>
<feature type="repeat" description="LRR 1" evidence="1">
    <location>
        <begin position="109"/>
        <end position="133"/>
    </location>
</feature>
<feature type="repeat" description="LRR 2" evidence="1">
    <location>
        <begin position="134"/>
        <end position="157"/>
    </location>
</feature>
<feature type="repeat" description="LRR 3" evidence="1">
    <location>
        <begin position="158"/>
        <end position="180"/>
    </location>
</feature>
<feature type="repeat" description="LRR 4" evidence="1">
    <location>
        <begin position="182"/>
        <end position="204"/>
    </location>
</feature>
<feature type="repeat" description="LRR 5" evidence="1">
    <location>
        <begin position="205"/>
        <end position="227"/>
    </location>
</feature>
<feature type="repeat" description="LRR 6; degenerate" evidence="4">
    <location>
        <begin position="228"/>
        <end position="251"/>
    </location>
</feature>
<feature type="repeat" description="LRR 7" evidence="1">
    <location>
        <begin position="252"/>
        <end position="276"/>
    </location>
</feature>
<feature type="repeat" description="LRR 8" evidence="1">
    <location>
        <begin position="278"/>
        <end position="301"/>
    </location>
</feature>
<feature type="repeat" description="LRR 9" evidence="1">
    <location>
        <begin position="302"/>
        <end position="324"/>
    </location>
</feature>
<feature type="repeat" description="LRR 10" evidence="1">
    <location>
        <begin position="326"/>
        <end position="349"/>
    </location>
</feature>
<feature type="repeat" description="LRR 11" evidence="1">
    <location>
        <begin position="351"/>
        <end position="373"/>
    </location>
</feature>
<feature type="repeat" description="LRR 12" evidence="1">
    <location>
        <begin position="374"/>
        <end position="400"/>
    </location>
</feature>
<feature type="repeat" description="LRR 13" evidence="1">
    <location>
        <begin position="402"/>
        <end position="422"/>
    </location>
</feature>
<feature type="repeat" description="LRR 14" evidence="1">
    <location>
        <begin position="423"/>
        <end position="446"/>
    </location>
</feature>
<feature type="repeat" description="LRR 15" evidence="1">
    <location>
        <begin position="447"/>
        <end position="470"/>
    </location>
</feature>
<feature type="repeat" description="LRR 16" evidence="1">
    <location>
        <begin position="472"/>
        <end position="496"/>
    </location>
</feature>
<feature type="repeat" description="LRR 17; degenerate" evidence="4">
    <location>
        <begin position="497"/>
        <end position="518"/>
    </location>
</feature>
<feature type="repeat" description="LRR 18" evidence="1">
    <location>
        <begin position="520"/>
        <end position="544"/>
    </location>
</feature>
<feature type="repeat" description="LRR 19" evidence="1">
    <location>
        <begin position="608"/>
        <end position="632"/>
    </location>
</feature>
<feature type="repeat" description="LRR 20" evidence="1">
    <location>
        <begin position="633"/>
        <end position="656"/>
    </location>
</feature>
<feature type="repeat" description="LRR 21" evidence="1">
    <location>
        <begin position="657"/>
        <end position="680"/>
    </location>
</feature>
<feature type="repeat" description="LRR 22" evidence="1">
    <location>
        <begin position="682"/>
        <end position="705"/>
    </location>
</feature>
<feature type="glycosylation site" description="N-linked (GlcNAc...) asparagine" evidence="2">
    <location>
        <position position="132"/>
    </location>
</feature>
<feature type="glycosylation site" description="N-linked (GlcNAc...) asparagine" evidence="2">
    <location>
        <position position="180"/>
    </location>
</feature>
<feature type="glycosylation site" description="N-linked (GlcNAc...) asparagine" evidence="2">
    <location>
        <position position="193"/>
    </location>
</feature>
<feature type="glycosylation site" description="N-linked (GlcNAc...) asparagine" evidence="2">
    <location>
        <position position="203"/>
    </location>
</feature>
<feature type="glycosylation site" description="N-linked (GlcNAc...) asparagine" evidence="2">
    <location>
        <position position="273"/>
    </location>
</feature>
<feature type="glycosylation site" description="N-linked (GlcNAc...) asparagine" evidence="2">
    <location>
        <position position="327"/>
    </location>
</feature>
<feature type="glycosylation site" description="N-linked (GlcNAc...) asparagine" evidence="2">
    <location>
        <position position="421"/>
    </location>
</feature>
<feature type="glycosylation site" description="N-linked (GlcNAc...) asparagine" evidence="2">
    <location>
        <position position="432"/>
    </location>
</feature>
<feature type="glycosylation site" description="N-linked (GlcNAc...) asparagine" evidence="2">
    <location>
        <position position="513"/>
    </location>
</feature>
<feature type="glycosylation site" description="N-linked (GlcNAc...) asparagine" evidence="2">
    <location>
        <position position="544"/>
    </location>
</feature>
<feature type="glycosylation site" description="N-linked (GlcNAc...) asparagine" evidence="2">
    <location>
        <position position="562"/>
    </location>
</feature>
<feature type="glycosylation site" description="N-linked (GlcNAc...) asparagine" evidence="2">
    <location>
        <position position="639"/>
    </location>
</feature>
<feature type="glycosylation site" description="N-linked (GlcNAc...) asparagine" evidence="2">
    <location>
        <position position="655"/>
    </location>
</feature>
<feature type="glycosylation site" description="N-linked (GlcNAc...) asparagine" evidence="2">
    <location>
        <position position="668"/>
    </location>
</feature>
<feature type="glycosylation site" description="N-linked (GlcNAc...) asparagine" evidence="2">
    <location>
        <position position="679"/>
    </location>
</feature>
<feature type="glycosylation site" description="N-linked (GlcNAc...) asparagine" evidence="2">
    <location>
        <position position="687"/>
    </location>
</feature>
<feature type="glycosylation site" description="N-linked (GlcNAc...) asparagine" evidence="2">
    <location>
        <position position="707"/>
    </location>
</feature>
<reference key="1">
    <citation type="journal article" date="2000" name="DNA Res.">
        <title>Structural analysis of Arabidopsis thaliana chromosome 3. I. Sequence features of the regions of 4,504,864 bp covered by sixty P1 and TAC clones.</title>
        <authorList>
            <person name="Sato S."/>
            <person name="Nakamura Y."/>
            <person name="Kaneko T."/>
            <person name="Katoh T."/>
            <person name="Asamizu E."/>
            <person name="Tabata S."/>
        </authorList>
    </citation>
    <scope>NUCLEOTIDE SEQUENCE [LARGE SCALE GENOMIC DNA]</scope>
    <source>
        <strain>cv. Columbia</strain>
    </source>
</reference>
<reference key="2">
    <citation type="journal article" date="2017" name="Plant J.">
        <title>Araport11: a complete reannotation of the Arabidopsis thaliana reference genome.</title>
        <authorList>
            <person name="Cheng C.Y."/>
            <person name="Krishnakumar V."/>
            <person name="Chan A.P."/>
            <person name="Thibaud-Nissen F."/>
            <person name="Schobel S."/>
            <person name="Town C.D."/>
        </authorList>
    </citation>
    <scope>GENOME REANNOTATION</scope>
    <source>
        <strain>cv. Columbia</strain>
    </source>
</reference>
<reference key="3">
    <citation type="journal article" date="2005" name="Plant Physiol.">
        <title>Phylogenomic analysis of the receptor-like proteins of rice and Arabidopsis.</title>
        <authorList>
            <person name="Fritz-Laylin L.K."/>
            <person name="Krishnamurthy N."/>
            <person name="Toer M."/>
            <person name="Sjoelander K.V."/>
            <person name="Jones J.D."/>
        </authorList>
    </citation>
    <scope>GENE FAMILY</scope>
</reference>
<reference key="4">
    <citation type="journal article" date="2008" name="Plant Physiol.">
        <title>A genome-wide functional investigation into the roles of receptor-like proteins in Arabidopsis.</title>
        <authorList>
            <person name="Wang G."/>
            <person name="Ellendorff U."/>
            <person name="Kemp B."/>
            <person name="Mansfield J.W."/>
            <person name="Forsyth A."/>
            <person name="Mitchell K."/>
            <person name="Bastas K."/>
            <person name="Liu C.-M."/>
            <person name="Woods-Toer A."/>
            <person name="Zipfel C."/>
            <person name="de Wit P.J.G.M."/>
            <person name="Jones J.D.G."/>
            <person name="Toer M."/>
            <person name="Thomma B.P.H.J."/>
        </authorList>
    </citation>
    <scope>GENE FAMILY</scope>
    <scope>NOMENCLATURE</scope>
    <source>
        <strain>cv. Columbia</strain>
    </source>
</reference>
<organism>
    <name type="scientific">Arabidopsis thaliana</name>
    <name type="common">Mouse-ear cress</name>
    <dbReference type="NCBI Taxonomy" id="3702"/>
    <lineage>
        <taxon>Eukaryota</taxon>
        <taxon>Viridiplantae</taxon>
        <taxon>Streptophyta</taxon>
        <taxon>Embryophyta</taxon>
        <taxon>Tracheophyta</taxon>
        <taxon>Spermatophyta</taxon>
        <taxon>Magnoliopsida</taxon>
        <taxon>eudicotyledons</taxon>
        <taxon>Gunneridae</taxon>
        <taxon>Pentapetalae</taxon>
        <taxon>rosids</taxon>
        <taxon>malvids</taxon>
        <taxon>Brassicales</taxon>
        <taxon>Brassicaceae</taxon>
        <taxon>Camelineae</taxon>
        <taxon>Arabidopsis</taxon>
    </lineage>
</organism>
<gene>
    <name evidence="3" type="primary">RLP38</name>
    <name evidence="5" type="ordered locus">At3g23120</name>
    <name evidence="6" type="ORF">MXC7.16</name>
</gene>
<sequence length="784" mass="87229">MIRSQSYCFLGITITIYFFFCLLPLPNTFASPPTQSLCRHDQRDALLELQKEFPIPSVILQNPWNKGIDCCSWGGVTCDAILGEVISLKLYFLSTASTSLKSSSALFKLQHLTHLDLSNCNLQGEIPSSIENLSHLTHLDLSTNHLVGEVPASIGNLNQLEYIDLRGNHLRGNIPTSFANLTKLSLLDLHENNFTGGDIVLSNLTSLAILDLSSNHFKSFFSADLSGLHNLEQIFGNENSFVGLFPASLLKISSLDKIQLSQNQFEGPIDFGNTSSSSRLTMLDISHNNFIGRVPSSLSKLVNLELLDLSHNNFRGLSPRSISKLVNLTSLDISYNKLEGQVPYFIWKPSNLQSVDLSHNSFFDLGKSVEVVNGAKLVGLNLGSNSLQGPIPQWICNFRFVFFLDLSDNRFTGSIPQCLKNSTDFNTLNLRNNSLSGFLPELCMDSTMLRSLDVSYNNFVGKLPKSLMNCQDMEFLNVRGNKIKDTFPFWLGSRKSLMVLVLRSNAFYGPVYNSTTYLGFPRLSIIDISNNDFVGSLPQDYFANWTEMATVWDINRLNYARNTSSRTIQYGGLQTIQRSNYVGDNFNMHADSMDLAYKGVDTDFNRIFRGFKVIDFSGNRFSGHIPRSIGLLSELLHLNLSGNAFTGNIPPSLANITNLETLDLSRNNLSGEIPRSLGNLSFLSNINFSHNHLQGFVPRSTQFGTQNCSSFVGNPGLYGLDEICRESHHVPVPTSQQHDGSSSELEEPVLNWIAAAIAFGPGVFCGFVIGHIFTSYKHLWFIAR</sequence>
<protein>
    <recommendedName>
        <fullName evidence="3">Receptor-like protein 38</fullName>
        <shortName evidence="3">AtRLP38</shortName>
    </recommendedName>
</protein>
<comment type="subcellular location">
    <subcellularLocation>
        <location evidence="4">Cell membrane</location>
        <topology evidence="4">Single-pass type I membrane protein</topology>
    </subcellularLocation>
</comment>
<comment type="similarity">
    <text evidence="4">Belongs to the RLP family.</text>
</comment>
<name>RLP38_ARATH</name>
<keyword id="KW-1003">Cell membrane</keyword>
<keyword id="KW-0325">Glycoprotein</keyword>
<keyword id="KW-0433">Leucine-rich repeat</keyword>
<keyword id="KW-0472">Membrane</keyword>
<keyword id="KW-0675">Receptor</keyword>
<keyword id="KW-1185">Reference proteome</keyword>
<keyword id="KW-0677">Repeat</keyword>
<keyword id="KW-0732">Signal</keyword>
<keyword id="KW-0812">Transmembrane</keyword>
<keyword id="KW-1133">Transmembrane helix</keyword>
<proteinExistence type="inferred from homology"/>
<evidence type="ECO:0000255" key="1"/>
<evidence type="ECO:0000255" key="2">
    <source>
        <dbReference type="PROSITE-ProRule" id="PRU00498"/>
    </source>
</evidence>
<evidence type="ECO:0000303" key="3">
    <source>
    </source>
</evidence>
<evidence type="ECO:0000305" key="4"/>
<evidence type="ECO:0000312" key="5">
    <source>
        <dbReference type="Araport" id="AT3G23120"/>
    </source>
</evidence>
<evidence type="ECO:0000312" key="6">
    <source>
        <dbReference type="EMBL" id="BAB02104.1"/>
    </source>
</evidence>